<keyword id="KW-0966">Cell projection</keyword>
<keyword id="KW-0970">Cilium biogenesis/degradation</keyword>
<keyword id="KW-0175">Coiled coil</keyword>
<keyword id="KW-0963">Cytoplasm</keyword>
<keyword id="KW-0206">Cytoskeleton</keyword>
<keyword id="KW-1185">Reference proteome</keyword>
<protein>
    <recommendedName>
        <fullName>Pericentriolar material 1 protein</fullName>
        <shortName>PCM-1</shortName>
    </recommendedName>
</protein>
<gene>
    <name type="primary">PCM1</name>
</gene>
<organism>
    <name type="scientific">Gallus gallus</name>
    <name type="common">Chicken</name>
    <dbReference type="NCBI Taxonomy" id="9031"/>
    <lineage>
        <taxon>Eukaryota</taxon>
        <taxon>Metazoa</taxon>
        <taxon>Chordata</taxon>
        <taxon>Craniata</taxon>
        <taxon>Vertebrata</taxon>
        <taxon>Euteleostomi</taxon>
        <taxon>Archelosauria</taxon>
        <taxon>Archosauria</taxon>
        <taxon>Dinosauria</taxon>
        <taxon>Saurischia</taxon>
        <taxon>Theropoda</taxon>
        <taxon>Coelurosauria</taxon>
        <taxon>Aves</taxon>
        <taxon>Neognathae</taxon>
        <taxon>Galloanserae</taxon>
        <taxon>Galliformes</taxon>
        <taxon>Phasianidae</taxon>
        <taxon>Phasianinae</taxon>
        <taxon>Gallus</taxon>
    </lineage>
</organism>
<dbReference type="EMBL" id="AJ508717">
    <property type="protein sequence ID" value="CAD48486.1"/>
    <property type="molecule type" value="mRNA"/>
</dbReference>
<dbReference type="RefSeq" id="NP_989862.1">
    <property type="nucleotide sequence ID" value="NM_204531.1"/>
</dbReference>
<dbReference type="SMR" id="Q8AV28"/>
<dbReference type="FunCoup" id="Q8AV28">
    <property type="interactions" value="1936"/>
</dbReference>
<dbReference type="STRING" id="9031.ENSGALP00000072490"/>
<dbReference type="GlyGen" id="Q8AV28">
    <property type="glycosylation" value="1 site"/>
</dbReference>
<dbReference type="PaxDb" id="9031-ENSGALP00000031473"/>
<dbReference type="GeneID" id="395204"/>
<dbReference type="KEGG" id="gga:395204"/>
<dbReference type="CTD" id="5108"/>
<dbReference type="VEuPathDB" id="HostDB:geneid_395204"/>
<dbReference type="eggNOG" id="ENOG502QRMF">
    <property type="taxonomic scope" value="Eukaryota"/>
</dbReference>
<dbReference type="InParanoid" id="Q8AV28"/>
<dbReference type="OrthoDB" id="2125770at2759"/>
<dbReference type="PhylomeDB" id="Q8AV28"/>
<dbReference type="Reactome" id="R-GGA-2565942">
    <property type="pathway name" value="Regulation of PLK1 Activity at G2/M Transition"/>
</dbReference>
<dbReference type="Reactome" id="R-GGA-380259">
    <property type="pathway name" value="Loss of Nlp from mitotic centrosomes"/>
</dbReference>
<dbReference type="Reactome" id="R-GGA-380270">
    <property type="pathway name" value="Recruitment of mitotic centrosome proteins and complexes"/>
</dbReference>
<dbReference type="Reactome" id="R-GGA-380284">
    <property type="pathway name" value="Loss of proteins required for interphase microtubule organization from the centrosome"/>
</dbReference>
<dbReference type="Reactome" id="R-GGA-380320">
    <property type="pathway name" value="Recruitment of NuMA to mitotic centrosomes"/>
</dbReference>
<dbReference type="Reactome" id="R-GGA-5620912">
    <property type="pathway name" value="Anchoring of the basal body to the plasma membrane"/>
</dbReference>
<dbReference type="Reactome" id="R-GGA-8854518">
    <property type="pathway name" value="AURKA Activation by TPX2"/>
</dbReference>
<dbReference type="PRO" id="PR:Q8AV28"/>
<dbReference type="Proteomes" id="UP000000539">
    <property type="component" value="Chromosome 4"/>
</dbReference>
<dbReference type="Bgee" id="ENSGALG00000013602">
    <property type="expression patterns" value="Expressed in spermatid and 12 other cell types or tissues"/>
</dbReference>
<dbReference type="GO" id="GO:0034451">
    <property type="term" value="C:centriolar satellite"/>
    <property type="evidence" value="ECO:0000250"/>
    <property type="project" value="UniProtKB"/>
</dbReference>
<dbReference type="GO" id="GO:0005813">
    <property type="term" value="C:centrosome"/>
    <property type="evidence" value="ECO:0000250"/>
    <property type="project" value="UniProtKB"/>
</dbReference>
<dbReference type="GO" id="GO:0036064">
    <property type="term" value="C:ciliary basal body"/>
    <property type="evidence" value="ECO:0000318"/>
    <property type="project" value="GO_Central"/>
</dbReference>
<dbReference type="GO" id="GO:0005737">
    <property type="term" value="C:cytoplasm"/>
    <property type="evidence" value="ECO:0007669"/>
    <property type="project" value="UniProtKB-KW"/>
</dbReference>
<dbReference type="GO" id="GO:0060271">
    <property type="term" value="P:cilium assembly"/>
    <property type="evidence" value="ECO:0000250"/>
    <property type="project" value="UniProtKB"/>
</dbReference>
<dbReference type="GO" id="GO:0035735">
    <property type="term" value="P:intraciliary transport involved in cilium assembly"/>
    <property type="evidence" value="ECO:0000250"/>
    <property type="project" value="UniProtKB"/>
</dbReference>
<dbReference type="GO" id="GO:0034454">
    <property type="term" value="P:microtubule anchoring at centrosome"/>
    <property type="evidence" value="ECO:0000318"/>
    <property type="project" value="GO_Central"/>
</dbReference>
<dbReference type="GO" id="GO:1905515">
    <property type="term" value="P:non-motile cilium assembly"/>
    <property type="evidence" value="ECO:0000318"/>
    <property type="project" value="GO_Central"/>
</dbReference>
<dbReference type="GO" id="GO:0090316">
    <property type="term" value="P:positive regulation of intracellular protein transport"/>
    <property type="evidence" value="ECO:0000250"/>
    <property type="project" value="UniProtKB"/>
</dbReference>
<dbReference type="GO" id="GO:0071539">
    <property type="term" value="P:protein localization to centrosome"/>
    <property type="evidence" value="ECO:0000318"/>
    <property type="project" value="GO_Central"/>
</dbReference>
<dbReference type="InterPro" id="IPR031446">
    <property type="entry name" value="PCM1_C"/>
</dbReference>
<dbReference type="InterPro" id="IPR024138">
    <property type="entry name" value="Pericentriolar_Pcm1"/>
</dbReference>
<dbReference type="PANTHER" id="PTHR14164:SF12">
    <property type="entry name" value="PERICENTRIOLAR MATERIAL 1 PROTEIN"/>
    <property type="match status" value="1"/>
</dbReference>
<dbReference type="PANTHER" id="PTHR14164">
    <property type="entry name" value="PERICENTRIOLAR MATERIAL 1-RELATED"/>
    <property type="match status" value="1"/>
</dbReference>
<dbReference type="Pfam" id="PF15717">
    <property type="entry name" value="PCM1_C"/>
    <property type="match status" value="1"/>
</dbReference>
<accession>Q8AV28</accession>
<proteinExistence type="evidence at transcript level"/>
<reference key="1">
    <citation type="journal article" date="2002" name="J. Cell Biol.">
        <title>Assembly of centrosomal proteins and microtubule organization depends on PCM-1.</title>
        <authorList>
            <person name="Dammermann A."/>
            <person name="Merdes A."/>
        </authorList>
    </citation>
    <scope>NUCLEOTIDE SEQUENCE [MRNA]</scope>
    <scope>FUNCTION</scope>
    <scope>SUBCELLULAR LOCATION</scope>
</reference>
<evidence type="ECO:0000250" key="1"/>
<evidence type="ECO:0000250" key="2">
    <source>
        <dbReference type="UniProtKB" id="Q15154"/>
    </source>
</evidence>
<evidence type="ECO:0000250" key="3">
    <source>
        <dbReference type="UniProtKB" id="Q9R0L6"/>
    </source>
</evidence>
<evidence type="ECO:0000255" key="4"/>
<evidence type="ECO:0000256" key="5">
    <source>
        <dbReference type="SAM" id="MobiDB-lite"/>
    </source>
</evidence>
<evidence type="ECO:0000269" key="6">
    <source>
    </source>
</evidence>
<evidence type="ECO:0000305" key="7"/>
<feature type="chain" id="PRO_0000274039" description="Pericentriolar material 1 protein">
    <location>
        <begin position="1"/>
        <end position="1904"/>
    </location>
</feature>
<feature type="region of interest" description="Disordered" evidence="5">
    <location>
        <begin position="1"/>
        <end position="135"/>
    </location>
</feature>
<feature type="region of interest" description="Disordered" evidence="5">
    <location>
        <begin position="159"/>
        <end position="179"/>
    </location>
</feature>
<feature type="region of interest" description="Disordered" evidence="5">
    <location>
        <begin position="265"/>
        <end position="303"/>
    </location>
</feature>
<feature type="region of interest" description="Disordered" evidence="5">
    <location>
        <begin position="338"/>
        <end position="361"/>
    </location>
</feature>
<feature type="region of interest" description="Disordered" evidence="5">
    <location>
        <begin position="376"/>
        <end position="407"/>
    </location>
</feature>
<feature type="region of interest" description="Disordered" evidence="5">
    <location>
        <begin position="430"/>
        <end position="489"/>
    </location>
</feature>
<feature type="region of interest" description="Disordered" evidence="5">
    <location>
        <begin position="520"/>
        <end position="559"/>
    </location>
</feature>
<feature type="region of interest" description="Disordered" evidence="5">
    <location>
        <begin position="686"/>
        <end position="706"/>
    </location>
</feature>
<feature type="region of interest" description="Disordered" evidence="5">
    <location>
        <begin position="773"/>
        <end position="840"/>
    </location>
</feature>
<feature type="region of interest" description="Disordered" evidence="5">
    <location>
        <begin position="991"/>
        <end position="1018"/>
    </location>
</feature>
<feature type="region of interest" description="Disordered" evidence="5">
    <location>
        <begin position="1063"/>
        <end position="1082"/>
    </location>
</feature>
<feature type="region of interest" description="Disordered" evidence="5">
    <location>
        <begin position="1088"/>
        <end position="1225"/>
    </location>
</feature>
<feature type="region of interest" description="Disordered" evidence="5">
    <location>
        <begin position="1616"/>
        <end position="1741"/>
    </location>
</feature>
<feature type="region of interest" description="Disordered" evidence="5">
    <location>
        <begin position="1774"/>
        <end position="1838"/>
    </location>
</feature>
<feature type="region of interest" description="Disordered" evidence="5">
    <location>
        <begin position="1865"/>
        <end position="1904"/>
    </location>
</feature>
<feature type="coiled-coil region" evidence="4">
    <location>
        <begin position="171"/>
        <end position="212"/>
    </location>
</feature>
<feature type="coiled-coil region" evidence="4">
    <location>
        <begin position="301"/>
        <end position="334"/>
    </location>
</feature>
<feature type="coiled-coil region" evidence="4">
    <location>
        <begin position="403"/>
        <end position="429"/>
    </location>
</feature>
<feature type="coiled-coil region" evidence="4">
    <location>
        <begin position="562"/>
        <end position="592"/>
    </location>
</feature>
<feature type="coiled-coil region" evidence="4">
    <location>
        <begin position="636"/>
        <end position="686"/>
    </location>
</feature>
<feature type="coiled-coil region" evidence="4">
    <location>
        <begin position="731"/>
        <end position="768"/>
    </location>
</feature>
<feature type="coiled-coil region" evidence="4">
    <location>
        <begin position="895"/>
        <end position="927"/>
    </location>
</feature>
<feature type="coiled-coil region" evidence="4">
    <location>
        <begin position="970"/>
        <end position="1000"/>
    </location>
</feature>
<feature type="coiled-coil region" evidence="4">
    <location>
        <begin position="1421"/>
        <end position="1447"/>
    </location>
</feature>
<feature type="compositionally biased region" description="Basic and acidic residues" evidence="5">
    <location>
        <begin position="43"/>
        <end position="60"/>
    </location>
</feature>
<feature type="compositionally biased region" description="Polar residues" evidence="5">
    <location>
        <begin position="107"/>
        <end position="118"/>
    </location>
</feature>
<feature type="compositionally biased region" description="Polar residues" evidence="5">
    <location>
        <begin position="280"/>
        <end position="298"/>
    </location>
</feature>
<feature type="compositionally biased region" description="Low complexity" evidence="5">
    <location>
        <begin position="338"/>
        <end position="348"/>
    </location>
</feature>
<feature type="compositionally biased region" description="Polar residues" evidence="5">
    <location>
        <begin position="349"/>
        <end position="361"/>
    </location>
</feature>
<feature type="compositionally biased region" description="Acidic residues" evidence="5">
    <location>
        <begin position="442"/>
        <end position="452"/>
    </location>
</feature>
<feature type="compositionally biased region" description="Polar residues" evidence="5">
    <location>
        <begin position="461"/>
        <end position="470"/>
    </location>
</feature>
<feature type="compositionally biased region" description="Low complexity" evidence="5">
    <location>
        <begin position="471"/>
        <end position="482"/>
    </location>
</feature>
<feature type="compositionally biased region" description="Basic and acidic residues" evidence="5">
    <location>
        <begin position="520"/>
        <end position="534"/>
    </location>
</feature>
<feature type="compositionally biased region" description="Acidic residues" evidence="5">
    <location>
        <begin position="535"/>
        <end position="544"/>
    </location>
</feature>
<feature type="compositionally biased region" description="Polar residues" evidence="5">
    <location>
        <begin position="687"/>
        <end position="706"/>
    </location>
</feature>
<feature type="compositionally biased region" description="Polar residues" evidence="5">
    <location>
        <begin position="779"/>
        <end position="804"/>
    </location>
</feature>
<feature type="compositionally biased region" description="Acidic residues" evidence="5">
    <location>
        <begin position="806"/>
        <end position="830"/>
    </location>
</feature>
<feature type="compositionally biased region" description="Polar residues" evidence="5">
    <location>
        <begin position="1064"/>
        <end position="1073"/>
    </location>
</feature>
<feature type="compositionally biased region" description="Polar residues" evidence="5">
    <location>
        <begin position="1093"/>
        <end position="1102"/>
    </location>
</feature>
<feature type="compositionally biased region" description="Basic and acidic residues" evidence="5">
    <location>
        <begin position="1103"/>
        <end position="1117"/>
    </location>
</feature>
<feature type="compositionally biased region" description="Polar residues" evidence="5">
    <location>
        <begin position="1141"/>
        <end position="1150"/>
    </location>
</feature>
<feature type="compositionally biased region" description="Basic and acidic residues" evidence="5">
    <location>
        <begin position="1151"/>
        <end position="1162"/>
    </location>
</feature>
<feature type="compositionally biased region" description="Low complexity" evidence="5">
    <location>
        <begin position="1173"/>
        <end position="1182"/>
    </location>
</feature>
<feature type="compositionally biased region" description="Basic and acidic residues" evidence="5">
    <location>
        <begin position="1616"/>
        <end position="1625"/>
    </location>
</feature>
<feature type="compositionally biased region" description="Acidic residues" evidence="5">
    <location>
        <begin position="1649"/>
        <end position="1658"/>
    </location>
</feature>
<feature type="compositionally biased region" description="Polar residues" evidence="5">
    <location>
        <begin position="1668"/>
        <end position="1678"/>
    </location>
</feature>
<feature type="compositionally biased region" description="Acidic residues" evidence="5">
    <location>
        <begin position="1680"/>
        <end position="1695"/>
    </location>
</feature>
<feature type="compositionally biased region" description="Polar residues" evidence="5">
    <location>
        <begin position="1698"/>
        <end position="1720"/>
    </location>
</feature>
<feature type="compositionally biased region" description="Polar residues" evidence="5">
    <location>
        <begin position="1728"/>
        <end position="1737"/>
    </location>
</feature>
<feature type="compositionally biased region" description="Polar residues" evidence="5">
    <location>
        <begin position="1779"/>
        <end position="1791"/>
    </location>
</feature>
<feature type="compositionally biased region" description="Low complexity" evidence="5">
    <location>
        <begin position="1800"/>
        <end position="1812"/>
    </location>
</feature>
<feature type="compositionally biased region" description="Basic and acidic residues" evidence="5">
    <location>
        <begin position="1881"/>
        <end position="1897"/>
    </location>
</feature>
<comment type="function">
    <text evidence="2 3 6">Required for centrosome assembly and function (PubMed:12403812). Essential for the correct localization of several centrosomal proteins including CETN3 and PCNT (By similarity). Required to anchor microtubules to the centrosome (PubMed:12403812). Probably involved in the biogenesis of cilia (By similarity).</text>
</comment>
<comment type="subunit">
    <text evidence="1">Self-associates.</text>
</comment>
<comment type="subcellular location">
    <subcellularLocation>
        <location evidence="6">Cytoplasm</location>
        <location evidence="6">Cytoskeleton</location>
    </subcellularLocation>
    <subcellularLocation>
        <location evidence="6">Cytoplasm</location>
        <location evidence="6">Cytoskeleton</location>
        <location evidence="6">Microtubule organizing center</location>
        <location evidence="6">Centrosome</location>
    </subcellularLocation>
    <subcellularLocation>
        <location evidence="6">Cytoplasmic granule</location>
    </subcellularLocation>
    <subcellularLocation>
        <location evidence="6">Cytoplasm</location>
        <location evidence="6">Cytoskeleton</location>
        <location evidence="6">Microtubule organizing center</location>
        <location evidence="6">Centrosome</location>
        <location evidence="6">Centriolar satellite</location>
    </subcellularLocation>
    <subcellularLocation>
        <location evidence="2">Cytoplasm</location>
        <location evidence="2">Cytoskeleton</location>
        <location evidence="2">Cilium basal body</location>
    </subcellularLocation>
    <text>The majority of the protein dissociates from the centrosome during metaphase and subsequently localizes to the cleavage site in telophase.</text>
</comment>
<comment type="similarity">
    <text evidence="7">Belongs to the PCM1 family.</text>
</comment>
<sequence length="1904" mass="212725">MATGGGPFEEGMNDQDLPSWSNESLDDRLNNTDWGCQQKKANRSSEKNKKKLGGEAETRLTNDISPESSPGMGRRKTRTPHSFPHARYMTQMSVPEQAELERLKQRINFSDLDQINTNKSKDPVSGSQKKESGEPLQCKELFGAALNKDFLQNGQLSIQEDGRGEPTMDSSQARDPQQEAKEELENLKKQHDLLKRMLQQQEQLKALQGRQAALLALQHKAEQAVAVVDDSVVTETTGSVSGVSLTSELNEELIDLIQRFHNQLHDSQTQSVPDNRRQAESLSLTREISQSRNSSVSEHQSDEKAQLFNKMRMLQGKKQKMDKLLGELHTLRDQHLNNSSFFPASSSPQRSIDQRSTTSAASAPVGVVTVINGESNSLASAPYPPDSLASQNESEEDDNLNPTEKLQKLNEVRKRLNELRELVHYYEQTSDMMTDAVNENTKEEEETEDSGSDSEHGDPQPVTNIRNPQGISSWSEINSNSNVQCGTNNRDGRHLNTDCEINNRSAANIRTLKMSSTLDCHNREDDKHADLPHGEDDEVEEDRASEDSMSSHRSSLGDVAGDAEFEQKINRLMAAKQKLRQLQNLAAMVQDDDPEPQVLTANASNMGDFLGEMEETKQQPNNVRVSTNKLQKDAGLNEKAREKFYEAKLQQQQRELKQLQEERRKLMEIQEKIEVLQKACPDLQSAGLGNSPANRQTSPATSTPAMNECNTAGKPLLEFGESVPVGNELWSEMRRHEILREELRRRRKQLEALMAEHQRRRELAETISTVAASVKSEGSEAQRTPQQSRTENRTMATWGGSTQCALDEEDGDEDGYLSDGLDQAEEEEDAPSMNDSFSAYPNNQIPESVYYLKGNKDRWKNCRPLSADGNYRPMSKTRQQQNISMRRQENFRWISELSYVEEKEQWQEQINQLKKQLEFSVSICQTLMQDQQTLSCFLQTLLAGPYNVVPNNVASSQVHLIMHQLNQCYTQLSWQQNNVQRLKQMLNDLMHQQEQQCQEKPSRKERGSSAPPPPSPVFCPFSFPPQPVNLFNIPGFTNISSFAPGINYNPVFPCGFGDFAHSGFPQSSEQQQHPLDHNASGKTEYMAFPKPFESSSSTGAENQRSHRQPEDEVEKRSTWLNDSQEVKKDDQSQQKAGFPVSVQSIASGHKNQSDTSRRRNFDEESLESFSSMPDPVDPTTVTKTFKSRKASAQASLASKDKTPKSKNKRKNSSQLKGRIKNTGYDSASASSVCEPCKSTKSKHSEEVVHAKVFSKKNREQLEKIIKYSRSTEMSSETGSDLSMFEALRDTIYSEVATLISQNESRPHFLIELFHELQLLNTDYLRQRALYALQDIVTRHLSENNEKGRCIKSLNTATWIASNSELTPSESLASTDDETFDKNFPTEACQDCEQNDADNGSTMSTSSHFEPFATDDLGNTVIHLDQALARMREYERMKIEAESTLDSEGCSSNLQGATAAKLEGPSTSECLSVPQSSEVSAVPCPRIDTQQLDRQIKAIMKEVIPFLKEHMDEVCSSQLLTSVRRMVLTLTQQNDESKEFVKFFHKQLGSILQDSLAKFAGRKLKDCGEDLLVEISEVLFNELAFFKLMQDLDNNSISVKQRCKRKIETTEEIQSYAKEDKDETETVKPVQGLETYDGNEVPESIKSDASDQEEDEESESGPVAISLSKAETQALTNYGSGEDENEDEEIEFEEGPVDVQTSLQASSETATENEQISSQELSKTKGSDILSSEQQSVNVKGEQDAATILPHYLNVVENTPPLPVNTPESFIAASMKTEESSSSLPGNETQMLDTACVVNKSSAGSSESSMAGSPDTESPVLVNEYEAGSGNVSQKSDEDDFVKVEDLPLKLAVYSEADLLKKIASEAQTNSLSDELLGGGGEQDRELVGDAQTLKEPETFGAQSA</sequence>
<name>PCM1_CHICK</name>